<protein>
    <recommendedName>
        <fullName>Protein TRANSPARENT TESTA 1</fullName>
    </recommendedName>
    <alternativeName>
        <fullName>TTL1</fullName>
    </alternativeName>
    <alternativeName>
        <fullName evidence="8">WIP-domain protein 1</fullName>
    </alternativeName>
    <alternativeName>
        <fullName>Zinc finger protein TT1</fullName>
    </alternativeName>
</protein>
<feature type="chain" id="PRO_0000047840" description="Protein TRANSPARENT TESTA 1">
    <location>
        <begin position="1"/>
        <end position="303"/>
    </location>
</feature>
<feature type="zinc finger region" description="C2H2-type 1" evidence="2">
    <location>
        <begin position="145"/>
        <end position="167"/>
    </location>
</feature>
<feature type="zinc finger region" description="C2H2-type 2; atypical" evidence="8">
    <location>
        <begin position="192"/>
        <end position="224"/>
    </location>
</feature>
<feature type="zinc finger region" description="C2H2-type 3; atypical" evidence="8">
    <location>
        <begin position="229"/>
        <end position="251"/>
    </location>
</feature>
<feature type="zinc finger region" description="C2H2-type 4; atypical" evidence="8">
    <location>
        <begin position="255"/>
        <end position="280"/>
    </location>
</feature>
<feature type="region of interest" description="Disordered" evidence="3">
    <location>
        <begin position="1"/>
        <end position="21"/>
    </location>
</feature>
<feature type="region of interest" description="Disordered" evidence="3">
    <location>
        <begin position="61"/>
        <end position="82"/>
    </location>
</feature>
<feature type="coiled-coil region" evidence="1">
    <location>
        <begin position="66"/>
        <end position="84"/>
    </location>
</feature>
<feature type="short sequence motif" description="Nuclear localization signal" evidence="6">
    <location>
        <begin position="221"/>
        <end position="224"/>
    </location>
</feature>
<feature type="short sequence motif" description="Nuclear localization signal" evidence="6">
    <location>
        <begin position="264"/>
        <end position="267"/>
    </location>
</feature>
<feature type="compositionally biased region" description="Acidic residues" evidence="3">
    <location>
        <begin position="67"/>
        <end position="82"/>
    </location>
</feature>
<feature type="sequence variant" description="In strain: cv. Landsberg erecta.">
    <original>H</original>
    <variation>N</variation>
    <location>
        <position position="201"/>
    </location>
</feature>
<feature type="sequence variant" description="In strain: cv. Landsberg erecta.">
    <original>L</original>
    <variation>F</variation>
    <location>
        <position position="301"/>
    </location>
</feature>
<organism>
    <name type="scientific">Arabidopsis thaliana</name>
    <name type="common">Mouse-ear cress</name>
    <dbReference type="NCBI Taxonomy" id="3702"/>
    <lineage>
        <taxon>Eukaryota</taxon>
        <taxon>Viridiplantae</taxon>
        <taxon>Streptophyta</taxon>
        <taxon>Embryophyta</taxon>
        <taxon>Tracheophyta</taxon>
        <taxon>Spermatophyta</taxon>
        <taxon>Magnoliopsida</taxon>
        <taxon>eudicotyledons</taxon>
        <taxon>Gunneridae</taxon>
        <taxon>Pentapetalae</taxon>
        <taxon>rosids</taxon>
        <taxon>malvids</taxon>
        <taxon>Brassicales</taxon>
        <taxon>Brassicaceae</taxon>
        <taxon>Camelineae</taxon>
        <taxon>Arabidopsis</taxon>
    </lineage>
</organism>
<dbReference type="EMBL" id="AF190298">
    <property type="protein sequence ID" value="AAL66406.1"/>
    <property type="molecule type" value="mRNA"/>
</dbReference>
<dbReference type="EMBL" id="AF190297">
    <property type="protein sequence ID" value="AAL66405.1"/>
    <property type="molecule type" value="Genomic_DNA"/>
</dbReference>
<dbReference type="EMBL" id="AJ318491">
    <property type="protein sequence ID" value="CAC86393.1"/>
    <property type="molecule type" value="mRNA"/>
</dbReference>
<dbReference type="EMBL" id="AF190299">
    <property type="protein sequence ID" value="AAL66407.1"/>
    <property type="molecule type" value="Genomic_DNA"/>
</dbReference>
<dbReference type="EMBL" id="AC018460">
    <property type="status" value="NOT_ANNOTATED_CDS"/>
    <property type="molecule type" value="Genomic_DNA"/>
</dbReference>
<dbReference type="EMBL" id="CP002684">
    <property type="protein sequence ID" value="AEE31740.1"/>
    <property type="molecule type" value="Genomic_DNA"/>
</dbReference>
<dbReference type="EMBL" id="AB493495">
    <property type="protein sequence ID" value="BAH30333.1"/>
    <property type="molecule type" value="mRNA"/>
</dbReference>
<dbReference type="RefSeq" id="NP_174737.2">
    <property type="nucleotide sequence ID" value="NM_103201.3"/>
</dbReference>
<dbReference type="BioGRID" id="25618">
    <property type="interactions" value="4"/>
</dbReference>
<dbReference type="STRING" id="3702.Q8VWG3"/>
<dbReference type="PaxDb" id="3702-AT1G34790.1"/>
<dbReference type="EnsemblPlants" id="AT1G34790.1">
    <property type="protein sequence ID" value="AT1G34790.1"/>
    <property type="gene ID" value="AT1G34790"/>
</dbReference>
<dbReference type="GeneID" id="840386"/>
<dbReference type="Gramene" id="AT1G34790.1">
    <property type="protein sequence ID" value="AT1G34790.1"/>
    <property type="gene ID" value="AT1G34790"/>
</dbReference>
<dbReference type="KEGG" id="ath:AT1G34790"/>
<dbReference type="Araport" id="AT1G34790"/>
<dbReference type="TAIR" id="AT1G34790">
    <property type="gene designation" value="TT1"/>
</dbReference>
<dbReference type="eggNOG" id="KOG1721">
    <property type="taxonomic scope" value="Eukaryota"/>
</dbReference>
<dbReference type="HOGENOM" id="CLU_052255_0_1_1"/>
<dbReference type="InParanoid" id="Q8VWG3"/>
<dbReference type="OMA" id="DIPCYCC"/>
<dbReference type="PhylomeDB" id="Q8VWG3"/>
<dbReference type="PRO" id="PR:Q8VWG3"/>
<dbReference type="Proteomes" id="UP000006548">
    <property type="component" value="Chromosome 1"/>
</dbReference>
<dbReference type="ExpressionAtlas" id="Q8VWG3">
    <property type="expression patterns" value="baseline"/>
</dbReference>
<dbReference type="GO" id="GO:0005634">
    <property type="term" value="C:nucleus"/>
    <property type="evidence" value="ECO:0000314"/>
    <property type="project" value="TAIR"/>
</dbReference>
<dbReference type="GO" id="GO:0003700">
    <property type="term" value="F:DNA-binding transcription factor activity"/>
    <property type="evidence" value="ECO:0000250"/>
    <property type="project" value="TAIR"/>
</dbReference>
<dbReference type="GO" id="GO:0008270">
    <property type="term" value="F:zinc ion binding"/>
    <property type="evidence" value="ECO:0007669"/>
    <property type="project" value="UniProtKB-KW"/>
</dbReference>
<dbReference type="GO" id="GO:0009813">
    <property type="term" value="P:flavonoid biosynthetic process"/>
    <property type="evidence" value="ECO:0000315"/>
    <property type="project" value="TAIR"/>
</dbReference>
<dbReference type="Gene3D" id="3.30.160.60">
    <property type="entry name" value="Classic Zinc Finger"/>
    <property type="match status" value="1"/>
</dbReference>
<dbReference type="InterPro" id="IPR055187">
    <property type="entry name" value="C2CH-3rd_BIRD-IDD"/>
</dbReference>
<dbReference type="InterPro" id="IPR043584">
    <property type="entry name" value="WIP1/2/3/4/5/6"/>
</dbReference>
<dbReference type="InterPro" id="IPR036236">
    <property type="entry name" value="Znf_C2H2_sf"/>
</dbReference>
<dbReference type="InterPro" id="IPR013087">
    <property type="entry name" value="Znf_C2H2_type"/>
</dbReference>
<dbReference type="PANTHER" id="PTHR45878:SF17">
    <property type="entry name" value="PROTEIN TRANSPARENT TESTA 1"/>
    <property type="match status" value="1"/>
</dbReference>
<dbReference type="PANTHER" id="PTHR45878">
    <property type="entry name" value="ZINC FINGER PROTEIN WIP2"/>
    <property type="match status" value="1"/>
</dbReference>
<dbReference type="Pfam" id="PF22995">
    <property type="entry name" value="C2CH-3rd_BIRD-IDD"/>
    <property type="match status" value="1"/>
</dbReference>
<dbReference type="Pfam" id="PF23115">
    <property type="entry name" value="zf-C2H2_STOP2_3rd"/>
    <property type="match status" value="1"/>
</dbReference>
<dbReference type="SUPFAM" id="SSF57667">
    <property type="entry name" value="beta-beta-alpha zinc fingers"/>
    <property type="match status" value="1"/>
</dbReference>
<dbReference type="PROSITE" id="PS00028">
    <property type="entry name" value="ZINC_FINGER_C2H2_1"/>
    <property type="match status" value="1"/>
</dbReference>
<dbReference type="PROSITE" id="PS50157">
    <property type="entry name" value="ZINC_FINGER_C2H2_2"/>
    <property type="match status" value="1"/>
</dbReference>
<reference key="1">
    <citation type="journal article" date="2002" name="Genes Dev.">
        <title>A. thaliana TRANSPARENT TESTA 1 is involved in seed coat development and defines the WIP subfamily of plant zinc finger proteins.</title>
        <authorList>
            <person name="Sagasser M."/>
            <person name="Lu G.-H."/>
            <person name="Hahlbrock K."/>
            <person name="Weisshaar B."/>
        </authorList>
    </citation>
    <scope>NUCLEOTIDE SEQUENCE [MRNA]</scope>
    <scope>FUNCTION</scope>
    <scope>SUBCELLULAR LOCATION</scope>
    <scope>TISSUE SPECIFICITY</scope>
    <scope>DEVELOPMENTAL STAGE</scope>
    <source>
        <strain>cv. Columbia</strain>
        <strain>cv. Landsberg erecta</strain>
    </source>
</reference>
<reference key="2">
    <citation type="journal article" date="2000" name="Nature">
        <title>Sequence and analysis of chromosome 1 of the plant Arabidopsis thaliana.</title>
        <authorList>
            <person name="Theologis A."/>
            <person name="Ecker J.R."/>
            <person name="Palm C.J."/>
            <person name="Federspiel N.A."/>
            <person name="Kaul S."/>
            <person name="White O."/>
            <person name="Alonso J."/>
            <person name="Altafi H."/>
            <person name="Araujo R."/>
            <person name="Bowman C.L."/>
            <person name="Brooks S.Y."/>
            <person name="Buehler E."/>
            <person name="Chan A."/>
            <person name="Chao Q."/>
            <person name="Chen H."/>
            <person name="Cheuk R.F."/>
            <person name="Chin C.W."/>
            <person name="Chung M.K."/>
            <person name="Conn L."/>
            <person name="Conway A.B."/>
            <person name="Conway A.R."/>
            <person name="Creasy T.H."/>
            <person name="Dewar K."/>
            <person name="Dunn P."/>
            <person name="Etgu P."/>
            <person name="Feldblyum T.V."/>
            <person name="Feng J.-D."/>
            <person name="Fong B."/>
            <person name="Fujii C.Y."/>
            <person name="Gill J.E."/>
            <person name="Goldsmith A.D."/>
            <person name="Haas B."/>
            <person name="Hansen N.F."/>
            <person name="Hughes B."/>
            <person name="Huizar L."/>
            <person name="Hunter J.L."/>
            <person name="Jenkins J."/>
            <person name="Johnson-Hopson C."/>
            <person name="Khan S."/>
            <person name="Khaykin E."/>
            <person name="Kim C.J."/>
            <person name="Koo H.L."/>
            <person name="Kremenetskaia I."/>
            <person name="Kurtz D.B."/>
            <person name="Kwan A."/>
            <person name="Lam B."/>
            <person name="Langin-Hooper S."/>
            <person name="Lee A."/>
            <person name="Lee J.M."/>
            <person name="Lenz C.A."/>
            <person name="Li J.H."/>
            <person name="Li Y.-P."/>
            <person name="Lin X."/>
            <person name="Liu S.X."/>
            <person name="Liu Z.A."/>
            <person name="Luros J.S."/>
            <person name="Maiti R."/>
            <person name="Marziali A."/>
            <person name="Militscher J."/>
            <person name="Miranda M."/>
            <person name="Nguyen M."/>
            <person name="Nierman W.C."/>
            <person name="Osborne B.I."/>
            <person name="Pai G."/>
            <person name="Peterson J."/>
            <person name="Pham P.K."/>
            <person name="Rizzo M."/>
            <person name="Rooney T."/>
            <person name="Rowley D."/>
            <person name="Sakano H."/>
            <person name="Salzberg S.L."/>
            <person name="Schwartz J.R."/>
            <person name="Shinn P."/>
            <person name="Southwick A.M."/>
            <person name="Sun H."/>
            <person name="Tallon L.J."/>
            <person name="Tambunga G."/>
            <person name="Toriumi M.J."/>
            <person name="Town C.D."/>
            <person name="Utterback T."/>
            <person name="Van Aken S."/>
            <person name="Vaysberg M."/>
            <person name="Vysotskaia V.S."/>
            <person name="Walker M."/>
            <person name="Wu D."/>
            <person name="Yu G."/>
            <person name="Fraser C.M."/>
            <person name="Venter J.C."/>
            <person name="Davis R.W."/>
        </authorList>
    </citation>
    <scope>NUCLEOTIDE SEQUENCE [LARGE SCALE GENOMIC DNA]</scope>
    <source>
        <strain>cv. Columbia</strain>
    </source>
</reference>
<reference key="3">
    <citation type="journal article" date="2017" name="Plant J.">
        <title>Araport11: a complete reannotation of the Arabidopsis thaliana reference genome.</title>
        <authorList>
            <person name="Cheng C.Y."/>
            <person name="Krishnakumar V."/>
            <person name="Chan A.P."/>
            <person name="Thibaud-Nissen F."/>
            <person name="Schobel S."/>
            <person name="Town C.D."/>
        </authorList>
    </citation>
    <scope>GENOME REANNOTATION</scope>
    <source>
        <strain>cv. Columbia</strain>
    </source>
</reference>
<reference key="4">
    <citation type="submission" date="2009-03" db="EMBL/GenBank/DDBJ databases">
        <title>ORF cloning and analysis of Arabidopsis transcription factor genes.</title>
        <authorList>
            <person name="Fujita M."/>
            <person name="Mizukado S."/>
            <person name="Seki M."/>
            <person name="Shinozaki K."/>
            <person name="Mitsuda N."/>
            <person name="Takiguchi Y."/>
            <person name="Takagi M."/>
        </authorList>
    </citation>
    <scope>NUCLEOTIDE SEQUENCE [LARGE SCALE MRNA]</scope>
</reference>
<reference key="5">
    <citation type="journal article" date="2010" name="FEBS Lett.">
        <title>Weird fingers: functional analysis of WIP domain proteins.</title>
        <authorList>
            <person name="Appelhagen I."/>
            <person name="Huep G."/>
            <person name="Lu G.H."/>
            <person name="Strompen G."/>
            <person name="Weisshaar B."/>
            <person name="Sagasser M."/>
        </authorList>
    </citation>
    <scope>FUNCTION</scope>
    <scope>SUBCELLULAR LOCATION</scope>
    <scope>ZINC-FINGER</scope>
</reference>
<reference key="6">
    <citation type="journal article" date="2011" name="Plant J.">
        <title>TRANSPARENT TESTA1 interacts with R2R3-MYB factors and affects early and late steps of flavonoid biosynthesis in the endothelium of Arabidopsis thaliana seeds.</title>
        <authorList>
            <person name="Appelhagen I."/>
            <person name="Lu G.H."/>
            <person name="Huep G."/>
            <person name="Schmelzer E."/>
            <person name="Weisshaar B."/>
            <person name="Sagasser M."/>
        </authorList>
    </citation>
    <scope>FUNCTION</scope>
    <scope>SUBUNIT</scope>
    <scope>INTERACTION WITH MYB75; TT2 AND TT16</scope>
    <scope>SUBCELLULAR LOCATION</scope>
    <scope>NUCLEAR LOCALIZATION SIGNAL</scope>
    <scope>DISRUPTION PHENOTYPE</scope>
</reference>
<sequence length="303" mass="34512">MESPPLYEISSSSSSEKPRHHFQSLDLFPNLNQNSCINNTLIEPLPLIDRINLNSNLDLNPNPLYAEEGEQEEEEEEEEDREVDVDLHIGLPGFGKPSNDAKQLKKRNGKEIATYDAGKGIENELSGKAYWIPAPEQILIGFTHFSCHVCFKTFNRYNNLQMHMWGHGSQYRKGPESLKGTQPRAMLGIPCYCCVEGCRNHIDHPRSKPLKDFRTLQTHYKRKHGHKPFSCRLCGKLLAVKGDWRTHEKNCGKRWVCVCGSDFKHKRSLKDHVKAFGSGHGPYPTGLFEEQASNSSVSETLFF</sequence>
<gene>
    <name evidence="7" type="primary">TT1</name>
    <name evidence="8" type="synonym">WIP1</name>
    <name type="ordered locus">At1g34790</name>
    <name type="ORF">F11O6.15</name>
</gene>
<comment type="function">
    <text evidence="4 6">May act as a transcriptional regulator involved in the differentiation of young endothelium. Altered differentiation results in incompetence for pigments synthesis and the lack of condensed tannins in the seed coat (PubMed:21477081). Plays a role in the regulatory network controlling flavonoid accumulation in endothelium cells during seed development (PubMed:21477081).</text>
</comment>
<comment type="subunit">
    <text evidence="6">Can form homodimers. Interacts with MYB75, TT2 and TT16.</text>
</comment>
<comment type="subcellular location">
    <subcellularLocation>
        <location evidence="4 5 6">Nucleus</location>
    </subcellularLocation>
</comment>
<comment type="tissue specificity">
    <text evidence="4">Restricted to the endothelium, the innermost cell layer of the seed coat and detected to a lesser extent in the other cell layers of the testa.</text>
</comment>
<comment type="developmental stage">
    <text evidence="4">Developing ovules and young seeds.</text>
</comment>
<comment type="disruption phenotype">
    <text evidence="6">Lack of flavanoid pigment accumulation in the seed coat endothelium (transparent testa phenotype).</text>
</comment>
<comment type="similarity">
    <text evidence="9">Belongs to the WIP C2H2-type zinc-finger protein family.</text>
</comment>
<proteinExistence type="evidence at protein level"/>
<evidence type="ECO:0000255" key="1"/>
<evidence type="ECO:0000255" key="2">
    <source>
        <dbReference type="PROSITE-ProRule" id="PRU00042"/>
    </source>
</evidence>
<evidence type="ECO:0000256" key="3">
    <source>
        <dbReference type="SAM" id="MobiDB-lite"/>
    </source>
</evidence>
<evidence type="ECO:0000269" key="4">
    <source>
    </source>
</evidence>
<evidence type="ECO:0000269" key="5">
    <source>
    </source>
</evidence>
<evidence type="ECO:0000269" key="6">
    <source>
    </source>
</evidence>
<evidence type="ECO:0000303" key="7">
    <source>
    </source>
</evidence>
<evidence type="ECO:0000303" key="8">
    <source>
    </source>
</evidence>
<evidence type="ECO:0000305" key="9"/>
<keyword id="KW-0175">Coiled coil</keyword>
<keyword id="KW-0479">Metal-binding</keyword>
<keyword id="KW-0539">Nucleus</keyword>
<keyword id="KW-1185">Reference proteome</keyword>
<keyword id="KW-0677">Repeat</keyword>
<keyword id="KW-0804">Transcription</keyword>
<keyword id="KW-0805">Transcription regulation</keyword>
<keyword id="KW-0862">Zinc</keyword>
<keyword id="KW-0863">Zinc-finger</keyword>
<accession>Q8VWG3</accession>
<accession>C0SUZ2</accession>
<accession>Q8VWL1</accession>
<name>TT1_ARATH</name>